<accession>C1CUE4</accession>
<organism>
    <name type="scientific">Streptococcus pneumoniae (strain Taiwan19F-14)</name>
    <dbReference type="NCBI Taxonomy" id="487213"/>
    <lineage>
        <taxon>Bacteria</taxon>
        <taxon>Bacillati</taxon>
        <taxon>Bacillota</taxon>
        <taxon>Bacilli</taxon>
        <taxon>Lactobacillales</taxon>
        <taxon>Streptococcaceae</taxon>
        <taxon>Streptococcus</taxon>
    </lineage>
</organism>
<gene>
    <name evidence="1" type="primary">recF</name>
    <name type="ordered locus">SPT_2245</name>
</gene>
<sequence length="365" mass="41916">MWLQHLSLKTFRNYKETKIDFNPKLNVFLGRNAQGKTNMLEAIYFLALTRSHRTRTDKNLIHFDEEQLHLSGLVQKKTGSIPLEIELTQKGRVTKVNHLKQARLSDYVGHMNVVLFAPEDLQLIKGAPSIRRKFIDMELGQIKPIYLSDLTNYNHILKQRNTYLKSAQKIDETFLSVLDDQLVDYGCRVMNHRLDFIKKLESFGRKKHFELSNQIEELSISYQSSVNITDKQNLSESFKIALEKSRSRDLFKKNTGVGPHRDDISFYINGMDASFGSQGQHRSLVLSIKLAEIELMESITTESPILLLDDVMSELDNTRQLKLLETISQSIQTFITTTSLDHLQNLPENLSIFTIQDGKASVNGN</sequence>
<dbReference type="EMBL" id="CP000921">
    <property type="protein sequence ID" value="ACO23191.1"/>
    <property type="molecule type" value="Genomic_DNA"/>
</dbReference>
<dbReference type="RefSeq" id="WP_000266662.1">
    <property type="nucleotide sequence ID" value="NC_012469.1"/>
</dbReference>
<dbReference type="SMR" id="C1CUE4"/>
<dbReference type="KEGG" id="snt:SPT_2245"/>
<dbReference type="HOGENOM" id="CLU_040267_0_1_9"/>
<dbReference type="GO" id="GO:0005737">
    <property type="term" value="C:cytoplasm"/>
    <property type="evidence" value="ECO:0007669"/>
    <property type="project" value="UniProtKB-SubCell"/>
</dbReference>
<dbReference type="GO" id="GO:0005524">
    <property type="term" value="F:ATP binding"/>
    <property type="evidence" value="ECO:0007669"/>
    <property type="project" value="UniProtKB-UniRule"/>
</dbReference>
<dbReference type="GO" id="GO:0003697">
    <property type="term" value="F:single-stranded DNA binding"/>
    <property type="evidence" value="ECO:0007669"/>
    <property type="project" value="UniProtKB-UniRule"/>
</dbReference>
<dbReference type="GO" id="GO:0006260">
    <property type="term" value="P:DNA replication"/>
    <property type="evidence" value="ECO:0007669"/>
    <property type="project" value="UniProtKB-UniRule"/>
</dbReference>
<dbReference type="GO" id="GO:0000731">
    <property type="term" value="P:DNA synthesis involved in DNA repair"/>
    <property type="evidence" value="ECO:0007669"/>
    <property type="project" value="TreeGrafter"/>
</dbReference>
<dbReference type="GO" id="GO:0006302">
    <property type="term" value="P:double-strand break repair"/>
    <property type="evidence" value="ECO:0007669"/>
    <property type="project" value="TreeGrafter"/>
</dbReference>
<dbReference type="GO" id="GO:0009432">
    <property type="term" value="P:SOS response"/>
    <property type="evidence" value="ECO:0007669"/>
    <property type="project" value="UniProtKB-UniRule"/>
</dbReference>
<dbReference type="CDD" id="cd03242">
    <property type="entry name" value="ABC_RecF"/>
    <property type="match status" value="1"/>
</dbReference>
<dbReference type="FunFam" id="1.20.1050.90:FF:000002">
    <property type="entry name" value="DNA replication and repair protein RecF"/>
    <property type="match status" value="1"/>
</dbReference>
<dbReference type="Gene3D" id="3.40.50.300">
    <property type="entry name" value="P-loop containing nucleotide triphosphate hydrolases"/>
    <property type="match status" value="1"/>
</dbReference>
<dbReference type="Gene3D" id="1.20.1050.90">
    <property type="entry name" value="RecF/RecN/SMC, N-terminal domain"/>
    <property type="match status" value="1"/>
</dbReference>
<dbReference type="HAMAP" id="MF_00365">
    <property type="entry name" value="RecF"/>
    <property type="match status" value="1"/>
</dbReference>
<dbReference type="InterPro" id="IPR001238">
    <property type="entry name" value="DNA-binding_RecF"/>
</dbReference>
<dbReference type="InterPro" id="IPR018078">
    <property type="entry name" value="DNA-binding_RecF_CS"/>
</dbReference>
<dbReference type="InterPro" id="IPR027417">
    <property type="entry name" value="P-loop_NTPase"/>
</dbReference>
<dbReference type="InterPro" id="IPR003395">
    <property type="entry name" value="RecF/RecN/SMC_N"/>
</dbReference>
<dbReference type="InterPro" id="IPR042174">
    <property type="entry name" value="RecF_2"/>
</dbReference>
<dbReference type="NCBIfam" id="TIGR00611">
    <property type="entry name" value="recf"/>
    <property type="match status" value="1"/>
</dbReference>
<dbReference type="PANTHER" id="PTHR32182">
    <property type="entry name" value="DNA REPLICATION AND REPAIR PROTEIN RECF"/>
    <property type="match status" value="1"/>
</dbReference>
<dbReference type="PANTHER" id="PTHR32182:SF0">
    <property type="entry name" value="DNA REPLICATION AND REPAIR PROTEIN RECF"/>
    <property type="match status" value="1"/>
</dbReference>
<dbReference type="Pfam" id="PF02463">
    <property type="entry name" value="SMC_N"/>
    <property type="match status" value="1"/>
</dbReference>
<dbReference type="SUPFAM" id="SSF52540">
    <property type="entry name" value="P-loop containing nucleoside triphosphate hydrolases"/>
    <property type="match status" value="1"/>
</dbReference>
<dbReference type="PROSITE" id="PS00617">
    <property type="entry name" value="RECF_1"/>
    <property type="match status" value="1"/>
</dbReference>
<dbReference type="PROSITE" id="PS00618">
    <property type="entry name" value="RECF_2"/>
    <property type="match status" value="1"/>
</dbReference>
<feature type="chain" id="PRO_1000133706" description="DNA replication and repair protein RecF">
    <location>
        <begin position="1"/>
        <end position="365"/>
    </location>
</feature>
<feature type="binding site" evidence="1">
    <location>
        <begin position="30"/>
        <end position="37"/>
    </location>
    <ligand>
        <name>ATP</name>
        <dbReference type="ChEBI" id="CHEBI:30616"/>
    </ligand>
</feature>
<evidence type="ECO:0000255" key="1">
    <source>
        <dbReference type="HAMAP-Rule" id="MF_00365"/>
    </source>
</evidence>
<keyword id="KW-0067">ATP-binding</keyword>
<keyword id="KW-0963">Cytoplasm</keyword>
<keyword id="KW-0227">DNA damage</keyword>
<keyword id="KW-0234">DNA repair</keyword>
<keyword id="KW-0235">DNA replication</keyword>
<keyword id="KW-0238">DNA-binding</keyword>
<keyword id="KW-0547">Nucleotide-binding</keyword>
<keyword id="KW-0742">SOS response</keyword>
<name>RECF_STRZT</name>
<comment type="function">
    <text evidence="1">The RecF protein is involved in DNA metabolism; it is required for DNA replication and normal SOS inducibility. RecF binds preferentially to single-stranded, linear DNA. It also seems to bind ATP.</text>
</comment>
<comment type="subcellular location">
    <subcellularLocation>
        <location evidence="1">Cytoplasm</location>
    </subcellularLocation>
</comment>
<comment type="similarity">
    <text evidence="1">Belongs to the RecF family.</text>
</comment>
<proteinExistence type="inferred from homology"/>
<protein>
    <recommendedName>
        <fullName evidence="1">DNA replication and repair protein RecF</fullName>
    </recommendedName>
</protein>
<reference key="1">
    <citation type="journal article" date="2010" name="Genome Biol.">
        <title>Structure and dynamics of the pan-genome of Streptococcus pneumoniae and closely related species.</title>
        <authorList>
            <person name="Donati C."/>
            <person name="Hiller N.L."/>
            <person name="Tettelin H."/>
            <person name="Muzzi A."/>
            <person name="Croucher N.J."/>
            <person name="Angiuoli S.V."/>
            <person name="Oggioni M."/>
            <person name="Dunning Hotopp J.C."/>
            <person name="Hu F.Z."/>
            <person name="Riley D.R."/>
            <person name="Covacci A."/>
            <person name="Mitchell T.J."/>
            <person name="Bentley S.D."/>
            <person name="Kilian M."/>
            <person name="Ehrlich G.D."/>
            <person name="Rappuoli R."/>
            <person name="Moxon E.R."/>
            <person name="Masignani V."/>
        </authorList>
    </citation>
    <scope>NUCLEOTIDE SEQUENCE [LARGE SCALE GENOMIC DNA]</scope>
    <source>
        <strain>Taiwan19F-14</strain>
    </source>
</reference>